<sequence length="95" mass="10039">MFGRLGAPEIILILVVIILLFGAKKLPDMARSLGKSARILKSEAKAMKSEAKADDAAPADPPNPEQSAAQRTIQAAPGDVTSSRPVTEPTDTTKR</sequence>
<protein>
    <recommendedName>
        <fullName evidence="1">Sec-independent protein translocase protein TatA</fullName>
    </recommendedName>
</protein>
<gene>
    <name evidence="1" type="primary">tatA</name>
    <name type="ordered locus">SCO1633</name>
    <name type="ORF">SCI41.16c</name>
</gene>
<organism>
    <name type="scientific">Streptomyces coelicolor (strain ATCC BAA-471 / A3(2) / M145)</name>
    <dbReference type="NCBI Taxonomy" id="100226"/>
    <lineage>
        <taxon>Bacteria</taxon>
        <taxon>Bacillati</taxon>
        <taxon>Actinomycetota</taxon>
        <taxon>Actinomycetes</taxon>
        <taxon>Kitasatosporales</taxon>
        <taxon>Streptomycetaceae</taxon>
        <taxon>Streptomyces</taxon>
        <taxon>Streptomyces albidoflavus group</taxon>
    </lineage>
</organism>
<name>TATA_STRCO</name>
<reference key="1">
    <citation type="journal article" date="2002" name="Nature">
        <title>Complete genome sequence of the model actinomycete Streptomyces coelicolor A3(2).</title>
        <authorList>
            <person name="Bentley S.D."/>
            <person name="Chater K.F."/>
            <person name="Cerdeno-Tarraga A.-M."/>
            <person name="Challis G.L."/>
            <person name="Thomson N.R."/>
            <person name="James K.D."/>
            <person name="Harris D.E."/>
            <person name="Quail M.A."/>
            <person name="Kieser H."/>
            <person name="Harper D."/>
            <person name="Bateman A."/>
            <person name="Brown S."/>
            <person name="Chandra G."/>
            <person name="Chen C.W."/>
            <person name="Collins M."/>
            <person name="Cronin A."/>
            <person name="Fraser A."/>
            <person name="Goble A."/>
            <person name="Hidalgo J."/>
            <person name="Hornsby T."/>
            <person name="Howarth S."/>
            <person name="Huang C.-H."/>
            <person name="Kieser T."/>
            <person name="Larke L."/>
            <person name="Murphy L.D."/>
            <person name="Oliver K."/>
            <person name="O'Neil S."/>
            <person name="Rabbinowitsch E."/>
            <person name="Rajandream M.A."/>
            <person name="Rutherford K.M."/>
            <person name="Rutter S."/>
            <person name="Seeger K."/>
            <person name="Saunders D."/>
            <person name="Sharp S."/>
            <person name="Squares R."/>
            <person name="Squares S."/>
            <person name="Taylor K."/>
            <person name="Warren T."/>
            <person name="Wietzorrek A."/>
            <person name="Woodward J.R."/>
            <person name="Barrell B.G."/>
            <person name="Parkhill J."/>
            <person name="Hopwood D.A."/>
        </authorList>
    </citation>
    <scope>NUCLEOTIDE SEQUENCE [LARGE SCALE GENOMIC DNA]</scope>
    <source>
        <strain>ATCC BAA-471 / A3(2) / M145</strain>
    </source>
</reference>
<comment type="function">
    <text evidence="1">Part of the twin-arginine translocation (Tat) system that transports large folded proteins containing a characteristic twin-arginine motif in their signal peptide across membranes. TatA could form the protein-conducting channel of the Tat system.</text>
</comment>
<comment type="subunit">
    <text evidence="1">The Tat system comprises two distinct complexes: a TatABC complex, containing multiple copies of TatA, TatB and TatC subunits, and a separate TatA complex, containing only TatA subunits. Substrates initially bind to the TatABC complex, which probably triggers association of the separate TatA complex to form the active translocon.</text>
</comment>
<comment type="subcellular location">
    <subcellularLocation>
        <location evidence="1">Cell membrane</location>
        <topology evidence="1">Single-pass membrane protein</topology>
    </subcellularLocation>
</comment>
<comment type="similarity">
    <text evidence="1">Belongs to the TatA/E family.</text>
</comment>
<feature type="chain" id="PRO_1000058969" description="Sec-independent protein translocase protein TatA">
    <location>
        <begin position="1"/>
        <end position="95"/>
    </location>
</feature>
<feature type="transmembrane region" description="Helical" evidence="1">
    <location>
        <begin position="1"/>
        <end position="21"/>
    </location>
</feature>
<feature type="region of interest" description="Disordered" evidence="2">
    <location>
        <begin position="44"/>
        <end position="95"/>
    </location>
</feature>
<feature type="compositionally biased region" description="Basic and acidic residues" evidence="2">
    <location>
        <begin position="44"/>
        <end position="55"/>
    </location>
</feature>
<keyword id="KW-1003">Cell membrane</keyword>
<keyword id="KW-0472">Membrane</keyword>
<keyword id="KW-0653">Protein transport</keyword>
<keyword id="KW-1185">Reference proteome</keyword>
<keyword id="KW-0811">Translocation</keyword>
<keyword id="KW-0812">Transmembrane</keyword>
<keyword id="KW-1133">Transmembrane helix</keyword>
<keyword id="KW-0813">Transport</keyword>
<proteinExistence type="inferred from homology"/>
<accession>Q9RJ68</accession>
<dbReference type="EMBL" id="AL939109">
    <property type="protein sequence ID" value="CAB59486.1"/>
    <property type="molecule type" value="Genomic_DNA"/>
</dbReference>
<dbReference type="RefSeq" id="NP_625908.1">
    <property type="nucleotide sequence ID" value="NC_003888.3"/>
</dbReference>
<dbReference type="RefSeq" id="WP_003977193.1">
    <property type="nucleotide sequence ID" value="NZ_VNID01000018.1"/>
</dbReference>
<dbReference type="SMR" id="Q9RJ68"/>
<dbReference type="FunCoup" id="Q9RJ68">
    <property type="interactions" value="7"/>
</dbReference>
<dbReference type="STRING" id="100226.gene:17759226"/>
<dbReference type="TCDB" id="2.A.64.2.2">
    <property type="family name" value="the twin arginine targeting (tat) family"/>
</dbReference>
<dbReference type="PaxDb" id="100226-SCO1633"/>
<dbReference type="GeneID" id="91387394"/>
<dbReference type="KEGG" id="sco:SCO1633"/>
<dbReference type="PATRIC" id="fig|100226.15.peg.1648"/>
<dbReference type="eggNOG" id="COG1826">
    <property type="taxonomic scope" value="Bacteria"/>
</dbReference>
<dbReference type="HOGENOM" id="CLU_086034_4_3_11"/>
<dbReference type="InParanoid" id="Q9RJ68"/>
<dbReference type="OrthoDB" id="5245163at2"/>
<dbReference type="Proteomes" id="UP000001973">
    <property type="component" value="Chromosome"/>
</dbReference>
<dbReference type="GO" id="GO:0033281">
    <property type="term" value="C:TAT protein transport complex"/>
    <property type="evidence" value="ECO:0007669"/>
    <property type="project" value="UniProtKB-UniRule"/>
</dbReference>
<dbReference type="GO" id="GO:0008320">
    <property type="term" value="F:protein transmembrane transporter activity"/>
    <property type="evidence" value="ECO:0007669"/>
    <property type="project" value="UniProtKB-UniRule"/>
</dbReference>
<dbReference type="GO" id="GO:0043953">
    <property type="term" value="P:protein transport by the Tat complex"/>
    <property type="evidence" value="ECO:0007669"/>
    <property type="project" value="UniProtKB-UniRule"/>
</dbReference>
<dbReference type="Gene3D" id="1.20.5.3310">
    <property type="match status" value="1"/>
</dbReference>
<dbReference type="HAMAP" id="MF_00236">
    <property type="entry name" value="TatA_E"/>
    <property type="match status" value="1"/>
</dbReference>
<dbReference type="InterPro" id="IPR003369">
    <property type="entry name" value="TatA/B/E"/>
</dbReference>
<dbReference type="InterPro" id="IPR006312">
    <property type="entry name" value="TatA/E"/>
</dbReference>
<dbReference type="NCBIfam" id="NF001854">
    <property type="entry name" value="PRK00575.1"/>
    <property type="match status" value="1"/>
</dbReference>
<dbReference type="NCBIfam" id="TIGR01411">
    <property type="entry name" value="tatAE"/>
    <property type="match status" value="1"/>
</dbReference>
<dbReference type="PANTHER" id="PTHR42982">
    <property type="entry name" value="SEC-INDEPENDENT PROTEIN TRANSLOCASE PROTEIN TATA"/>
    <property type="match status" value="1"/>
</dbReference>
<dbReference type="PANTHER" id="PTHR42982:SF8">
    <property type="entry name" value="SEC-INDEPENDENT PROTEIN TRANSLOCASE PROTEIN TATA"/>
    <property type="match status" value="1"/>
</dbReference>
<dbReference type="Pfam" id="PF02416">
    <property type="entry name" value="TatA_B_E"/>
    <property type="match status" value="1"/>
</dbReference>
<evidence type="ECO:0000255" key="1">
    <source>
        <dbReference type="HAMAP-Rule" id="MF_00236"/>
    </source>
</evidence>
<evidence type="ECO:0000256" key="2">
    <source>
        <dbReference type="SAM" id="MobiDB-lite"/>
    </source>
</evidence>